<name>MYH1_BOVIN</name>
<organism>
    <name type="scientific">Bos taurus</name>
    <name type="common">Bovine</name>
    <dbReference type="NCBI Taxonomy" id="9913"/>
    <lineage>
        <taxon>Eukaryota</taxon>
        <taxon>Metazoa</taxon>
        <taxon>Chordata</taxon>
        <taxon>Craniata</taxon>
        <taxon>Vertebrata</taxon>
        <taxon>Euteleostomi</taxon>
        <taxon>Mammalia</taxon>
        <taxon>Eutheria</taxon>
        <taxon>Laurasiatheria</taxon>
        <taxon>Artiodactyla</taxon>
        <taxon>Ruminantia</taxon>
        <taxon>Pecora</taxon>
        <taxon>Bovidae</taxon>
        <taxon>Bovinae</taxon>
        <taxon>Bos</taxon>
    </lineage>
</organism>
<keyword id="KW-0009">Actin-binding</keyword>
<keyword id="KW-0067">ATP-binding</keyword>
<keyword id="KW-0112">Calmodulin-binding</keyword>
<keyword id="KW-0175">Coiled coil</keyword>
<keyword id="KW-0963">Cytoplasm</keyword>
<keyword id="KW-1009">Hearing</keyword>
<keyword id="KW-0488">Methylation</keyword>
<keyword id="KW-0505">Motor protein</keyword>
<keyword id="KW-0514">Muscle protein</keyword>
<keyword id="KW-0518">Myosin</keyword>
<keyword id="KW-0547">Nucleotide-binding</keyword>
<keyword id="KW-0597">Phosphoprotein</keyword>
<keyword id="KW-1185">Reference proteome</keyword>
<keyword id="KW-0787">Thick filament</keyword>
<evidence type="ECO:0000250" key="1"/>
<evidence type="ECO:0000250" key="2">
    <source>
        <dbReference type="UniProtKB" id="P12882"/>
    </source>
</evidence>
<evidence type="ECO:0000250" key="3">
    <source>
        <dbReference type="UniProtKB" id="Q28641"/>
    </source>
</evidence>
<evidence type="ECO:0000250" key="4">
    <source>
        <dbReference type="UniProtKB" id="Q29RW1"/>
    </source>
</evidence>
<evidence type="ECO:0000250" key="5">
    <source>
        <dbReference type="UniProtKB" id="Q5SX40"/>
    </source>
</evidence>
<evidence type="ECO:0000255" key="6"/>
<evidence type="ECO:0000255" key="7">
    <source>
        <dbReference type="PROSITE-ProRule" id="PRU00116"/>
    </source>
</evidence>
<evidence type="ECO:0000255" key="8">
    <source>
        <dbReference type="PROSITE-ProRule" id="PRU00782"/>
    </source>
</evidence>
<evidence type="ECO:0000255" key="9">
    <source>
        <dbReference type="PROSITE-ProRule" id="PRU01190"/>
    </source>
</evidence>
<evidence type="ECO:0000256" key="10">
    <source>
        <dbReference type="SAM" id="MobiDB-lite"/>
    </source>
</evidence>
<evidence type="ECO:0000305" key="11"/>
<accession>Q9BE40</accession>
<sequence length="1938" mass="222990">MSSDQEMAVFGEAAPYLRKSEKERIEAQNKPFDAKTSVFVADPKESFVKATVQSREGGKVTAKTEAGATVTVKEDQVFPMNPPKFDKIEDMAMMTHLHEPAVLYNLKERYAAWMIYTYSGLFCVTVNPYKWLPVYNAEVVTAYRGKKRQEAPPHIFSISDNAYQFMLTDRENQSILITGESGAGKTVNTKRVIQYFATIAVTGEKKKEEPTSGKMQGTLEDQIISANPLLEAFGNAKTVRNDNSSRFGKFIRIHFGTTGKLASADIETYLLEKSRVTFQLKAERSYHIFYQIMSNKKPELIEMLLITTNPYDYAYVSQGEITVPSIDDQEELMATDSAIEILGFTSDERVSIYKLTGAVMHYGNLKFKQKQREEQAEPDGTEVADKAAYLQGLNSADLLKALCYPRVKVGNEFVTKGQTVEQVYNAVGALAKAVYDKMFLWMVARINQQLDTKQPRQYFIGVLDIAGFEIFDFNSLEQLCINFTNEKLQQFFNHHMFVLEQEEYKKEGIEWEFIDFGMDLAACIELIEKPMGIFSILEEECMFPKATDMSFKNKLYEQHLGKSNNFQKPKPAKGKAEAHFSLIHYAGTVDYNITGWLDKNKDPLNETVVGLYQKSSVKTLALLFSGPASGEAEGGPKKGGKKKGSSFQTVSALFRENLNKLMTNLRSTHPHFVRCIIPNETKTPGAMEHELVLHQLRCNGVLEGIRICRKGFPSRILYADFKQRYKVLNASAIPEGQFIDSKKASEKLLASIDVDHTQYKFGHTKVFFKAGLLGLLEEMRDEKLAQLITRTQARCRGFLARVEYQKMVERRESIFCIQYNVRAFMNVKHWPWMKLYFKIKPLLKSAETEKEMANMKEEFEKTKEELAKSEAKRKELEEKMVTLTQEKNDLQLQVQSEADALADAEERCDQLIKTKIQLEAKIKEVTERAEDEEEINAELTAKKRKLEDECSELKKDIDDLELTLAKVEKEKHATENKVKNLTEEMAGLDETIAKLTKEKKALQEAHQQTLDDLQAEEDKVNTLTKAKTKLEQQVDDLEGSLEQEKKLRMDLERAKRKLEGDLKLAQESTMDIENDKQQLDEKLKKKEFEMSNLQSKIEDEQALAMQLQKKIKELQARIEELEEEIEAERASRAKAEKQRSDLSRELEEISERLEEAGGATSAQIEMNKKREAEFQKMRRDLEEATLQHEATAAALRKKHADSVAELGEQIDNLQRVKQKLEKEKSEMKMEIDDLASNMETVSKAKGNLEKMCRALEDQLSELKTKEDEQQRLINDLTTQRARLQTESGEFSRQLDEKDALVSQLSRGKQAFTQQIEELKRQLEEEIKAKSALAHALQSARHDCDLLREQYEEEQEGKAELQRAMSKANSEVAQWRTKYETDAIQRTEELEEAKKKLAQRLQDAEEHVEAVNAKCASLEKTKQRLQNEVEDLMIDVERTNAACAALDKKQRNFDKILSEWKQKYEETHAELEASQKESRSLSTELFKIKNAYEESLDQLETLKRENKNLQQEISDLTEQIAEGGKRIHELEKVKKQVEQEKSEIQAALEEAEASLEHEEGKILRIQLELNQVKSEIDRKIAEKDEEIDQLKRNHIRIVESMQSTLDAEIRSRNDAIRLKKKMEGDLNEMEIQLNHANRMAAEALKNYRSTQAILKDTQIHLDDALRGQEDLKEQLAMVERRANLLQAEIEELRATLEQTERSRKIAEQELLDASERVQLLHTQNTSLINTKKKLETDITQIQGEMEDIIQEARNAEEKAKKAITDAAMMAEELKKEQDTSAHLERMKKNLEQTVKDLQHRLDEAEQLALKGGKKQIQKLEARVRELEGEVESEQKRNVEAVKGLRKHERRVKELTYQTEEDRKNILRLQDLVDKLQAKVKSYKRQAEEAEEQSNVNLSKFRKLQHELEEAEERADIAESQVNKLRVKSREVHTKIISEE</sequence>
<protein>
    <recommendedName>
        <fullName>Myosin-1</fullName>
    </recommendedName>
    <alternativeName>
        <fullName>Myosin heavy chain 1</fullName>
    </alternativeName>
    <alternativeName>
        <fullName>Myosin heavy chain 2x</fullName>
        <shortName>MyHC-2x</shortName>
    </alternativeName>
    <alternativeName>
        <fullName>Myosin heavy chain, skeletal muscle, adult 1</fullName>
    </alternativeName>
</protein>
<reference key="1">
    <citation type="journal article" date="2004" name="Meat Sci.">
        <title>Myosin heavy chain isoforms expressed in bovine skeletal muscles.</title>
        <authorList>
            <person name="Chikuni K."/>
            <person name="Muroya S."/>
            <person name="Nakajima I."/>
        </authorList>
        <dbReference type="AGRICOLA" id="IND43619651"/>
    </citation>
    <scope>NUCLEOTIDE SEQUENCE [MRNA]</scope>
    <source>
        <strain>Holstein</strain>
        <tissue>Skeletal muscle</tissue>
    </source>
</reference>
<gene>
    <name type="primary">MYH1</name>
</gene>
<feature type="chain" id="PRO_0000274161" description="Myosin-1">
    <location>
        <begin position="1"/>
        <end position="1938"/>
    </location>
</feature>
<feature type="domain" description="Myosin N-terminal SH3-like" evidence="9">
    <location>
        <begin position="33"/>
        <end position="82"/>
    </location>
</feature>
<feature type="domain" description="Myosin motor" evidence="8">
    <location>
        <begin position="86"/>
        <end position="781"/>
    </location>
</feature>
<feature type="domain" description="IQ" evidence="7">
    <location>
        <begin position="784"/>
        <end position="813"/>
    </location>
</feature>
<feature type="region of interest" description="Actin-binding" evidence="1">
    <location>
        <begin position="658"/>
        <end position="680"/>
    </location>
</feature>
<feature type="region of interest" description="Actin-binding" evidence="1">
    <location>
        <begin position="760"/>
        <end position="774"/>
    </location>
</feature>
<feature type="region of interest" description="Disordered" evidence="10">
    <location>
        <begin position="1124"/>
        <end position="1146"/>
    </location>
</feature>
<feature type="region of interest" description="Disordered" evidence="10">
    <location>
        <begin position="1152"/>
        <end position="1171"/>
    </location>
</feature>
<feature type="coiled-coil region" evidence="6">
    <location>
        <begin position="842"/>
        <end position="1938"/>
    </location>
</feature>
<feature type="compositionally biased region" description="Basic and acidic residues" evidence="10">
    <location>
        <begin position="1127"/>
        <end position="1146"/>
    </location>
</feature>
<feature type="binding site" evidence="6">
    <location>
        <begin position="179"/>
        <end position="186"/>
    </location>
    <ligand>
        <name>ATP</name>
        <dbReference type="ChEBI" id="CHEBI:30616"/>
    </ligand>
</feature>
<feature type="modified residue" description="Phosphothreonine" evidence="4">
    <location>
        <position position="64"/>
    </location>
</feature>
<feature type="modified residue" description="Phosphothreonine" evidence="4">
    <location>
        <position position="69"/>
    </location>
</feature>
<feature type="modified residue" description="N6,N6,N6-trimethyllysine" evidence="6">
    <location>
        <position position="130"/>
    </location>
</feature>
<feature type="modified residue" description="Phosphotyrosine" evidence="4">
    <location>
        <position position="389"/>
    </location>
</feature>
<feature type="modified residue" description="Phosphothreonine" evidence="4">
    <location>
        <position position="419"/>
    </location>
</feature>
<feature type="modified residue" description="Phosphotyrosine" evidence="4">
    <location>
        <position position="424"/>
    </location>
</feature>
<feature type="modified residue" description="Phosphoserine" evidence="4">
    <location>
        <position position="625"/>
    </location>
</feature>
<feature type="modified residue" description="Pros-methylhistidine" evidence="3">
    <location>
        <position position="756"/>
    </location>
</feature>
<feature type="modified residue" description="Phosphoserine" evidence="4">
    <location>
        <position position="1091"/>
    </location>
</feature>
<feature type="modified residue" description="Phosphoserine" evidence="4">
    <location>
        <position position="1095"/>
    </location>
</feature>
<feature type="modified residue" description="Phosphoserine" evidence="4">
    <location>
        <position position="1161"/>
    </location>
</feature>
<feature type="modified residue" description="Phosphoserine" evidence="4">
    <location>
        <position position="1236"/>
    </location>
</feature>
<feature type="modified residue" description="Phosphothreonine" evidence="4">
    <location>
        <position position="1240"/>
    </location>
</feature>
<feature type="modified residue" description="Phosphoserine" evidence="4">
    <location>
        <position position="1242"/>
    </location>
</feature>
<feature type="modified residue" description="Phosphoserine" evidence="4">
    <location>
        <position position="1260"/>
    </location>
</feature>
<feature type="modified residue" description="Phosphothreonine" evidence="4">
    <location>
        <position position="1264"/>
    </location>
</feature>
<feature type="modified residue" description="Phosphothreonine" evidence="4">
    <location>
        <position position="1285"/>
    </location>
</feature>
<feature type="modified residue" description="Phosphoserine" evidence="4">
    <location>
        <position position="1287"/>
    </location>
</feature>
<feature type="modified residue" description="Phosphoserine" evidence="4">
    <location>
        <position position="1291"/>
    </location>
</feature>
<feature type="modified residue" description="Phosphoserine" evidence="4">
    <location>
        <position position="1302"/>
    </location>
</feature>
<feature type="modified residue" description="Phosphoserine" evidence="4">
    <location>
        <position position="1305"/>
    </location>
</feature>
<feature type="modified residue" description="Phosphotyrosine" evidence="4">
    <location>
        <position position="1463"/>
    </location>
</feature>
<feature type="modified residue" description="Phosphothreonine" evidence="4">
    <location>
        <position position="1466"/>
    </location>
</feature>
<feature type="modified residue" description="Phosphoserine" evidence="4">
    <location>
        <position position="1473"/>
    </location>
</feature>
<feature type="modified residue" description="Phosphotyrosine" evidence="4">
    <location>
        <position position="1491"/>
    </location>
</feature>
<feature type="modified residue" description="Phosphoserine" evidence="4">
    <location>
        <position position="1494"/>
    </location>
</feature>
<feature type="modified residue" description="Phosphothreonine" evidence="4">
    <location>
        <position position="1500"/>
    </location>
</feature>
<feature type="modified residue" description="Phosphoserine" evidence="4">
    <location>
        <position position="1513"/>
    </location>
</feature>
<feature type="modified residue" description="Phosphothreonine" evidence="4">
    <location>
        <position position="1516"/>
    </location>
</feature>
<feature type="modified residue" description="Phosphoserine" evidence="4">
    <location>
        <position position="1541"/>
    </location>
</feature>
<feature type="modified residue" description="Phosphoserine" evidence="4">
    <location>
        <position position="1553"/>
    </location>
</feature>
<feature type="modified residue" description="Phosphoserine" evidence="4">
    <location>
        <position position="1573"/>
    </location>
</feature>
<feature type="modified residue" description="Phosphoserine" evidence="4">
    <location>
        <position position="1599"/>
    </location>
</feature>
<feature type="modified residue" description="Phosphoserine" evidence="4">
    <location>
        <position position="1602"/>
    </location>
</feature>
<feature type="modified residue" description="Phosphoserine" evidence="4">
    <location>
        <position position="1713"/>
    </location>
</feature>
<feature type="modified residue" description="Phosphoserine" evidence="4">
    <location>
        <position position="1725"/>
    </location>
</feature>
<feature type="modified residue" description="Phosphothreonine" evidence="4">
    <location>
        <position position="1729"/>
    </location>
</feature>
<feature type="modified residue" description="Phosphothreonine" evidence="4">
    <location>
        <position position="1735"/>
    </location>
</feature>
<dbReference type="EMBL" id="AB059399">
    <property type="protein sequence ID" value="BAB40921.2"/>
    <property type="molecule type" value="mRNA"/>
</dbReference>
<dbReference type="RefSeq" id="NP_776542.1">
    <property type="nucleotide sequence ID" value="NM_174117.1"/>
</dbReference>
<dbReference type="RefSeq" id="XP_010814282.1">
    <property type="nucleotide sequence ID" value="XM_010815980.4"/>
</dbReference>
<dbReference type="SMR" id="Q9BE40"/>
<dbReference type="FunCoup" id="Q9BE40">
    <property type="interactions" value="102"/>
</dbReference>
<dbReference type="STRING" id="9913.ENSBTAP00000009327"/>
<dbReference type="BindingDB" id="Q9BE40"/>
<dbReference type="PaxDb" id="9913-ENSBTAP00000009327"/>
<dbReference type="Ensembl" id="ENSBTAT00000009327.4">
    <property type="protein sequence ID" value="ENSBTAP00000009327.3"/>
    <property type="gene ID" value="ENSBTAG00000018204.6"/>
</dbReference>
<dbReference type="GeneID" id="281337"/>
<dbReference type="KEGG" id="bta:281337"/>
<dbReference type="CTD" id="4619"/>
<dbReference type="VEuPathDB" id="HostDB:ENSBTAG00000018204"/>
<dbReference type="VGNC" id="VGNC:55851">
    <property type="gene designation" value="MYH1"/>
</dbReference>
<dbReference type="eggNOG" id="KOG0161">
    <property type="taxonomic scope" value="Eukaryota"/>
</dbReference>
<dbReference type="GeneTree" id="ENSGT00940000163211"/>
<dbReference type="HOGENOM" id="CLU_000192_8_1_1"/>
<dbReference type="InParanoid" id="Q9BE40"/>
<dbReference type="OMA" id="TWDWFLL"/>
<dbReference type="OrthoDB" id="312459at2759"/>
<dbReference type="TreeFam" id="TF314375"/>
<dbReference type="Proteomes" id="UP000009136">
    <property type="component" value="Chromosome 19"/>
</dbReference>
<dbReference type="Bgee" id="ENSBTAG00000018204">
    <property type="expression patterns" value="Expressed in biceps femoris and 69 other cell types or tissues"/>
</dbReference>
<dbReference type="GO" id="GO:0005737">
    <property type="term" value="C:cytoplasm"/>
    <property type="evidence" value="ECO:0000318"/>
    <property type="project" value="GO_Central"/>
</dbReference>
<dbReference type="GO" id="GO:0030016">
    <property type="term" value="C:myofibril"/>
    <property type="evidence" value="ECO:0007669"/>
    <property type="project" value="UniProtKB-SubCell"/>
</dbReference>
<dbReference type="GO" id="GO:0032982">
    <property type="term" value="C:myosin filament"/>
    <property type="evidence" value="ECO:0000318"/>
    <property type="project" value="GO_Central"/>
</dbReference>
<dbReference type="GO" id="GO:0016460">
    <property type="term" value="C:myosin II complex"/>
    <property type="evidence" value="ECO:0000318"/>
    <property type="project" value="GO_Central"/>
</dbReference>
<dbReference type="GO" id="GO:0051015">
    <property type="term" value="F:actin filament binding"/>
    <property type="evidence" value="ECO:0000318"/>
    <property type="project" value="GO_Central"/>
</dbReference>
<dbReference type="GO" id="GO:0005524">
    <property type="term" value="F:ATP binding"/>
    <property type="evidence" value="ECO:0007669"/>
    <property type="project" value="UniProtKB-KW"/>
</dbReference>
<dbReference type="GO" id="GO:0005516">
    <property type="term" value="F:calmodulin binding"/>
    <property type="evidence" value="ECO:0007669"/>
    <property type="project" value="UniProtKB-KW"/>
</dbReference>
<dbReference type="GO" id="GO:0000146">
    <property type="term" value="F:microfilament motor activity"/>
    <property type="evidence" value="ECO:0000318"/>
    <property type="project" value="GO_Central"/>
</dbReference>
<dbReference type="GO" id="GO:0006936">
    <property type="term" value="P:muscle contraction"/>
    <property type="evidence" value="ECO:0000318"/>
    <property type="project" value="GO_Central"/>
</dbReference>
<dbReference type="CDD" id="cd01377">
    <property type="entry name" value="MYSc_class_II"/>
    <property type="match status" value="1"/>
</dbReference>
<dbReference type="FunFam" id="1.10.10.820:FF:000001">
    <property type="entry name" value="Myosin heavy chain"/>
    <property type="match status" value="1"/>
</dbReference>
<dbReference type="FunFam" id="1.20.5.340:FF:000002">
    <property type="entry name" value="Myosin heavy chain"/>
    <property type="match status" value="1"/>
</dbReference>
<dbReference type="FunFam" id="1.20.5.340:FF:000003">
    <property type="entry name" value="Myosin heavy chain"/>
    <property type="match status" value="1"/>
</dbReference>
<dbReference type="FunFam" id="1.20.5.340:FF:000004">
    <property type="entry name" value="Myosin heavy chain"/>
    <property type="match status" value="1"/>
</dbReference>
<dbReference type="FunFam" id="1.20.5.340:FF:000006">
    <property type="entry name" value="Myosin heavy chain"/>
    <property type="match status" value="1"/>
</dbReference>
<dbReference type="FunFam" id="1.20.5.340:FF:000013">
    <property type="entry name" value="Myosin heavy chain"/>
    <property type="match status" value="1"/>
</dbReference>
<dbReference type="FunFam" id="1.20.5.370:FF:000001">
    <property type="entry name" value="Myosin heavy chain"/>
    <property type="match status" value="1"/>
</dbReference>
<dbReference type="FunFam" id="1.20.5.370:FF:000002">
    <property type="entry name" value="Myosin heavy chain"/>
    <property type="match status" value="1"/>
</dbReference>
<dbReference type="FunFam" id="1.20.5.370:FF:000003">
    <property type="entry name" value="Myosin heavy chain"/>
    <property type="match status" value="1"/>
</dbReference>
<dbReference type="FunFam" id="1.20.5.370:FF:000007">
    <property type="entry name" value="Myosin heavy chain"/>
    <property type="match status" value="1"/>
</dbReference>
<dbReference type="FunFam" id="1.20.5.370:FF:000008">
    <property type="entry name" value="Myosin heavy chain"/>
    <property type="match status" value="1"/>
</dbReference>
<dbReference type="FunFam" id="1.20.5.4820:FF:000001">
    <property type="entry name" value="Myosin heavy chain"/>
    <property type="match status" value="1"/>
</dbReference>
<dbReference type="FunFam" id="1.20.58.530:FF:000001">
    <property type="entry name" value="Myosin heavy chain"/>
    <property type="match status" value="1"/>
</dbReference>
<dbReference type="FunFam" id="2.30.30.360:FF:000001">
    <property type="entry name" value="Myosin heavy chain"/>
    <property type="match status" value="1"/>
</dbReference>
<dbReference type="FunFam" id="3.40.850.10:FF:000024">
    <property type="entry name" value="Myosin heavy chain, isoform J"/>
    <property type="match status" value="1"/>
</dbReference>
<dbReference type="FunFam" id="1.20.120.720:FF:000001">
    <property type="entry name" value="Myosin heavy chain, muscle"/>
    <property type="match status" value="1"/>
</dbReference>
<dbReference type="Gene3D" id="1.10.10.820">
    <property type="match status" value="1"/>
</dbReference>
<dbReference type="Gene3D" id="1.20.5.340">
    <property type="match status" value="5"/>
</dbReference>
<dbReference type="Gene3D" id="1.20.5.370">
    <property type="match status" value="4"/>
</dbReference>
<dbReference type="Gene3D" id="1.20.5.4820">
    <property type="match status" value="1"/>
</dbReference>
<dbReference type="Gene3D" id="1.20.58.530">
    <property type="match status" value="1"/>
</dbReference>
<dbReference type="Gene3D" id="6.10.250.2420">
    <property type="match status" value="1"/>
</dbReference>
<dbReference type="Gene3D" id="3.40.850.10">
    <property type="entry name" value="Kinesin motor domain"/>
    <property type="match status" value="1"/>
</dbReference>
<dbReference type="Gene3D" id="2.30.30.360">
    <property type="entry name" value="Myosin S1 fragment, N-terminal"/>
    <property type="match status" value="1"/>
</dbReference>
<dbReference type="Gene3D" id="1.20.120.720">
    <property type="entry name" value="Myosin VI head, motor domain, U50 subdomain"/>
    <property type="match status" value="1"/>
</dbReference>
<dbReference type="InterPro" id="IPR000048">
    <property type="entry name" value="IQ_motif_EF-hand-BS"/>
</dbReference>
<dbReference type="InterPro" id="IPR036961">
    <property type="entry name" value="Kinesin_motor_dom_sf"/>
</dbReference>
<dbReference type="InterPro" id="IPR001609">
    <property type="entry name" value="Myosin_head_motor_dom-like"/>
</dbReference>
<dbReference type="InterPro" id="IPR004009">
    <property type="entry name" value="Myosin_N"/>
</dbReference>
<dbReference type="InterPro" id="IPR008989">
    <property type="entry name" value="Myosin_S1_N"/>
</dbReference>
<dbReference type="InterPro" id="IPR002928">
    <property type="entry name" value="Myosin_tail"/>
</dbReference>
<dbReference type="InterPro" id="IPR027417">
    <property type="entry name" value="P-loop_NTPase"/>
</dbReference>
<dbReference type="InterPro" id="IPR014751">
    <property type="entry name" value="XRCC4-like_C"/>
</dbReference>
<dbReference type="PANTHER" id="PTHR45615">
    <property type="entry name" value="MYOSIN HEAVY CHAIN, NON-MUSCLE"/>
    <property type="match status" value="1"/>
</dbReference>
<dbReference type="PANTHER" id="PTHR45615:SF2">
    <property type="entry name" value="MYOSIN-1"/>
    <property type="match status" value="1"/>
</dbReference>
<dbReference type="Pfam" id="PF00063">
    <property type="entry name" value="Myosin_head"/>
    <property type="match status" value="1"/>
</dbReference>
<dbReference type="Pfam" id="PF02736">
    <property type="entry name" value="Myosin_N"/>
    <property type="match status" value="1"/>
</dbReference>
<dbReference type="Pfam" id="PF01576">
    <property type="entry name" value="Myosin_tail_1"/>
    <property type="match status" value="1"/>
</dbReference>
<dbReference type="PRINTS" id="PR00193">
    <property type="entry name" value="MYOSINHEAVY"/>
</dbReference>
<dbReference type="SMART" id="SM00015">
    <property type="entry name" value="IQ"/>
    <property type="match status" value="1"/>
</dbReference>
<dbReference type="SMART" id="SM00242">
    <property type="entry name" value="MYSc"/>
    <property type="match status" value="1"/>
</dbReference>
<dbReference type="SUPFAM" id="SSF90257">
    <property type="entry name" value="Myosin rod fragments"/>
    <property type="match status" value="5"/>
</dbReference>
<dbReference type="SUPFAM" id="SSF52540">
    <property type="entry name" value="P-loop containing nucleoside triphosphate hydrolases"/>
    <property type="match status" value="1"/>
</dbReference>
<dbReference type="SUPFAM" id="SSF57997">
    <property type="entry name" value="Tropomyosin"/>
    <property type="match status" value="1"/>
</dbReference>
<dbReference type="PROSITE" id="PS50096">
    <property type="entry name" value="IQ"/>
    <property type="match status" value="1"/>
</dbReference>
<dbReference type="PROSITE" id="PS51456">
    <property type="entry name" value="MYOSIN_MOTOR"/>
    <property type="match status" value="1"/>
</dbReference>
<dbReference type="PROSITE" id="PS51844">
    <property type="entry name" value="SH3_LIKE"/>
    <property type="match status" value="1"/>
</dbReference>
<comment type="function">
    <text evidence="5">Required for normal hearing. It plays a role in cochlear amplification of auditory stimuli, likely through the positive regulation of prestin (SLC26A5) activity and outer hair cell (OHC) electromotility.</text>
</comment>
<comment type="subunit">
    <text evidence="2">Muscle myosin is a hexameric protein that consists of 2 heavy chain subunits (MHC), 2 alkali light chain subunits (MLC) and 2 regulatory light chain subunits (MLC-2). Interacts with SLC26A5.</text>
</comment>
<comment type="subcellular location">
    <subcellularLocation>
        <location evidence="1">Cytoplasm</location>
        <location evidence="1">Myofibril</location>
    </subcellularLocation>
    <text evidence="1">Thick filaments of the myofibrils.</text>
</comment>
<comment type="domain">
    <text>The rodlike tail sequence is highly repetitive, showing cycles of a 28-residue repeat pattern composed of 4 heptapeptides, characteristic for alpha-helical coiled coils.</text>
</comment>
<comment type="domain">
    <text evidence="11">Limited proteolysis of myosin heavy chain produces 1 light meromyosin (LMM) and 1 heavy meromyosin (HMM). HMM can be further cleaved into 2 globular subfragments (S1) and 1 rod-shaped subfragment (S2).</text>
</comment>
<comment type="similarity">
    <text evidence="11">Belongs to the TRAFAC class myosin-kinesin ATPase superfamily. Myosin family.</text>
</comment>
<comment type="caution">
    <text evidence="11">Represents a conventional myosin. This protein should not be confused with the unconventional myosin-1 (MYO1).</text>
</comment>
<proteinExistence type="evidence at transcript level"/>